<protein>
    <recommendedName>
        <fullName evidence="1">Phosphoadenosine 5'-phosphosulfate reductase</fullName>
        <shortName evidence="1">PAPS reductase</shortName>
        <ecNumber evidence="1">1.8.4.8</ecNumber>
    </recommendedName>
    <alternativeName>
        <fullName evidence="1">3'-phosphoadenylylsulfate reductase</fullName>
    </alternativeName>
    <alternativeName>
        <fullName evidence="1">PAPS reductase, thioredoxin dependent</fullName>
    </alternativeName>
    <alternativeName>
        <fullName evidence="1">PAPS sulfotransferase</fullName>
    </alternativeName>
    <alternativeName>
        <fullName evidence="1">PAdoPS reductase</fullName>
    </alternativeName>
</protein>
<keyword id="KW-0963">Cytoplasm</keyword>
<keyword id="KW-0560">Oxidoreductase</keyword>
<reference key="1">
    <citation type="submission" date="2008-02" db="EMBL/GenBank/DDBJ databases">
        <title>Complete sequence of Yersinia pseudotuberculosis YPIII.</title>
        <authorList>
            <consortium name="US DOE Joint Genome Institute"/>
            <person name="Copeland A."/>
            <person name="Lucas S."/>
            <person name="Lapidus A."/>
            <person name="Glavina del Rio T."/>
            <person name="Dalin E."/>
            <person name="Tice H."/>
            <person name="Bruce D."/>
            <person name="Goodwin L."/>
            <person name="Pitluck S."/>
            <person name="Munk A.C."/>
            <person name="Brettin T."/>
            <person name="Detter J.C."/>
            <person name="Han C."/>
            <person name="Tapia R."/>
            <person name="Schmutz J."/>
            <person name="Larimer F."/>
            <person name="Land M."/>
            <person name="Hauser L."/>
            <person name="Challacombe J.F."/>
            <person name="Green L."/>
            <person name="Lindler L.E."/>
            <person name="Nikolich M.P."/>
            <person name="Richardson P."/>
        </authorList>
    </citation>
    <scope>NUCLEOTIDE SEQUENCE [LARGE SCALE GENOMIC DNA]</scope>
    <source>
        <strain>YPIII</strain>
    </source>
</reference>
<proteinExistence type="inferred from homology"/>
<feature type="chain" id="PRO_1000092195" description="Phosphoadenosine 5'-phosphosulfate reductase">
    <location>
        <begin position="1"/>
        <end position="244"/>
    </location>
</feature>
<feature type="active site" description="Nucleophile; cysteine thiosulfonate intermediate" evidence="1">
    <location>
        <position position="239"/>
    </location>
</feature>
<sequence>MSQFNLSELNALPKAKQAAALVLVNGQLEHLTAQERVSWALDNLPGEFVLSSSFGIQAAVCLHLVTRQRPDIPVILTDTGYLFPETYRFIDDLTEKLQLNLQVFRAAHSPAWQEARYGKLWEQGVEGIERYNTLNKVEPMNRALEALGAQTWFAGLRREQSGGRSQLPVLALQRGIFKLLPIIDWDNRQVYQYLTQHGLSYHPLWEQGYLSVGDTHTTRKWEPGMSEEETRFFGLKRECGLHEG</sequence>
<name>CYSH_YERPY</name>
<accession>B1JJG7</accession>
<dbReference type="EC" id="1.8.4.8" evidence="1"/>
<dbReference type="EMBL" id="CP000950">
    <property type="protein sequence ID" value="ACA69707.1"/>
    <property type="molecule type" value="Genomic_DNA"/>
</dbReference>
<dbReference type="RefSeq" id="WP_011191774.1">
    <property type="nucleotide sequence ID" value="NZ_CP009792.1"/>
</dbReference>
<dbReference type="SMR" id="B1JJG7"/>
<dbReference type="KEGG" id="ypy:YPK_3440"/>
<dbReference type="PATRIC" id="fig|502800.11.peg.4179"/>
<dbReference type="UniPathway" id="UPA00140">
    <property type="reaction ID" value="UER00206"/>
</dbReference>
<dbReference type="GO" id="GO:0005737">
    <property type="term" value="C:cytoplasm"/>
    <property type="evidence" value="ECO:0007669"/>
    <property type="project" value="UniProtKB-SubCell"/>
</dbReference>
<dbReference type="GO" id="GO:0004604">
    <property type="term" value="F:phosphoadenylyl-sulfate reductase (thioredoxin) activity"/>
    <property type="evidence" value="ECO:0007669"/>
    <property type="project" value="UniProtKB-UniRule"/>
</dbReference>
<dbReference type="GO" id="GO:0070814">
    <property type="term" value="P:hydrogen sulfide biosynthetic process"/>
    <property type="evidence" value="ECO:0007669"/>
    <property type="project" value="UniProtKB-UniRule"/>
</dbReference>
<dbReference type="GO" id="GO:0019379">
    <property type="term" value="P:sulfate assimilation, phosphoadenylyl sulfate reduction by phosphoadenylyl-sulfate reductase (thioredoxin)"/>
    <property type="evidence" value="ECO:0007669"/>
    <property type="project" value="UniProtKB-UniRule"/>
</dbReference>
<dbReference type="CDD" id="cd23945">
    <property type="entry name" value="PAPS_reductase"/>
    <property type="match status" value="1"/>
</dbReference>
<dbReference type="FunFam" id="3.40.50.620:FF:000043">
    <property type="entry name" value="Phosphoadenosine phosphosulfate reductase"/>
    <property type="match status" value="1"/>
</dbReference>
<dbReference type="Gene3D" id="3.40.50.620">
    <property type="entry name" value="HUPs"/>
    <property type="match status" value="1"/>
</dbReference>
<dbReference type="HAMAP" id="MF_00063">
    <property type="entry name" value="CysH"/>
    <property type="match status" value="1"/>
</dbReference>
<dbReference type="InterPro" id="IPR004511">
    <property type="entry name" value="PAPS/APS_Rdtase"/>
</dbReference>
<dbReference type="InterPro" id="IPR002500">
    <property type="entry name" value="PAPS_reduct_dom"/>
</dbReference>
<dbReference type="InterPro" id="IPR011800">
    <property type="entry name" value="PAPS_reductase_CysH"/>
</dbReference>
<dbReference type="InterPro" id="IPR014729">
    <property type="entry name" value="Rossmann-like_a/b/a_fold"/>
</dbReference>
<dbReference type="NCBIfam" id="TIGR00434">
    <property type="entry name" value="cysH"/>
    <property type="match status" value="1"/>
</dbReference>
<dbReference type="NCBIfam" id="TIGR02057">
    <property type="entry name" value="PAPS_reductase"/>
    <property type="match status" value="1"/>
</dbReference>
<dbReference type="NCBIfam" id="NF002537">
    <property type="entry name" value="PRK02090.1"/>
    <property type="match status" value="1"/>
</dbReference>
<dbReference type="PANTHER" id="PTHR46509">
    <property type="entry name" value="PHOSPHOADENOSINE PHOSPHOSULFATE REDUCTASE"/>
    <property type="match status" value="1"/>
</dbReference>
<dbReference type="PANTHER" id="PTHR46509:SF1">
    <property type="entry name" value="PHOSPHOADENOSINE PHOSPHOSULFATE REDUCTASE"/>
    <property type="match status" value="1"/>
</dbReference>
<dbReference type="Pfam" id="PF01507">
    <property type="entry name" value="PAPS_reduct"/>
    <property type="match status" value="1"/>
</dbReference>
<dbReference type="PIRSF" id="PIRSF000857">
    <property type="entry name" value="PAPS_reductase"/>
    <property type="match status" value="1"/>
</dbReference>
<dbReference type="SUPFAM" id="SSF52402">
    <property type="entry name" value="Adenine nucleotide alpha hydrolases-like"/>
    <property type="match status" value="1"/>
</dbReference>
<evidence type="ECO:0000255" key="1">
    <source>
        <dbReference type="HAMAP-Rule" id="MF_00063"/>
    </source>
</evidence>
<organism>
    <name type="scientific">Yersinia pseudotuberculosis serotype O:3 (strain YPIII)</name>
    <dbReference type="NCBI Taxonomy" id="502800"/>
    <lineage>
        <taxon>Bacteria</taxon>
        <taxon>Pseudomonadati</taxon>
        <taxon>Pseudomonadota</taxon>
        <taxon>Gammaproteobacteria</taxon>
        <taxon>Enterobacterales</taxon>
        <taxon>Yersiniaceae</taxon>
        <taxon>Yersinia</taxon>
    </lineage>
</organism>
<comment type="function">
    <text evidence="1">Catalyzes the formation of sulfite from phosphoadenosine 5'-phosphosulfate (PAPS) using thioredoxin as an electron donor.</text>
</comment>
<comment type="catalytic activity">
    <reaction evidence="1">
        <text>[thioredoxin]-disulfide + sulfite + adenosine 3',5'-bisphosphate + 2 H(+) = [thioredoxin]-dithiol + 3'-phosphoadenylyl sulfate</text>
        <dbReference type="Rhea" id="RHEA:11724"/>
        <dbReference type="Rhea" id="RHEA-COMP:10698"/>
        <dbReference type="Rhea" id="RHEA-COMP:10700"/>
        <dbReference type="ChEBI" id="CHEBI:15378"/>
        <dbReference type="ChEBI" id="CHEBI:17359"/>
        <dbReference type="ChEBI" id="CHEBI:29950"/>
        <dbReference type="ChEBI" id="CHEBI:50058"/>
        <dbReference type="ChEBI" id="CHEBI:58339"/>
        <dbReference type="ChEBI" id="CHEBI:58343"/>
        <dbReference type="EC" id="1.8.4.8"/>
    </reaction>
</comment>
<comment type="pathway">
    <text evidence="1">Sulfur metabolism; hydrogen sulfide biosynthesis; sulfite from sulfate: step 3/3.</text>
</comment>
<comment type="subcellular location">
    <subcellularLocation>
        <location evidence="1">Cytoplasm</location>
    </subcellularLocation>
</comment>
<comment type="similarity">
    <text evidence="1">Belongs to the PAPS reductase family. CysH subfamily.</text>
</comment>
<gene>
    <name evidence="1" type="primary">cysH</name>
    <name type="ordered locus">YPK_3440</name>
</gene>